<gene>
    <name evidence="1" type="primary">alaS</name>
    <name type="ordered locus">HNE_2741</name>
</gene>
<sequence length="881" mass="93653">MNGVNDIRETFLGFFEKNGHARRPSAPLVPQNDPTLLFVNAGMVPFKNIFTGAEKPFAPRATTSQKCVRAGGKHNDLDNVGYTARHHTFFEMLGNFSFGDYFKDDAVALAWELVTKEYGLDAKRLLVTVYAEDEEAPAIWKKVAGLDDSRIIRIATSDNFWSMGDTGPCGPCSEIFFDHGDKVAGGPPGSPDEDGDRFIEIWNLVFMQFEQHEGGKRTNLPKPSIDTGMGLERVAAVLQGVHNNYDIDLFRALIAAEEEVYGQKASGDKTASFRVIADHLRTSAFLVADGILPSNEGRGYVLRRIMRRAMRHGHMLGAREPQMHRLVPALVAEMGKAYPELGRAQVAIEAAIEQEEARFQRTLGNGLSLLDKAASELSPGEALPGDVAFRLSDTFGFPLDLTQDILRGRGIEVDVDGFETALDAQRETSRAGGFSSGDQATEEIWFSVRDEKGPTKFTGYSSTAGEGRLIAIAAGGALIETVTAGPAELVFDATPFYAESGGQAGDHGEIVFEDGARFVVRDVQKRAGDLHVHIGELVSGSVKTGMKAQMSVNAARRKAVMANHSATHLMHAALRKVLGPHVTQKGSLVEADRFRFDFSHGAPVTAAQLEAIEDEVNAQIRANIETGIKVTTPDKAIEAGALALFGEKYGDEVRVLSMGDAGEGGRPYSVELCGGIHVSRSGDIAVFTILSEGGVSAGIRRIEGATGAEALAYLKGRAQIAADVAESLKVPLKDLPRRVASLTEERRTLERELSEAKRKLAMGGGGGAPAGPEVINGVNLIARVAEGVGGKELRALVDEAKSKIGSGVVVFVGVDGGKAGVAIGVTKDLTEKFSAVELVKAAAAAIGGQGGGGRPDMAQAGGPDGDKANEALEAVRAALKG</sequence>
<name>SYA_HYPNA</name>
<reference key="1">
    <citation type="journal article" date="2006" name="J. Bacteriol.">
        <title>Comparative genomic evidence for a close relationship between the dimorphic prosthecate bacteria Hyphomonas neptunium and Caulobacter crescentus.</title>
        <authorList>
            <person name="Badger J.H."/>
            <person name="Hoover T.R."/>
            <person name="Brun Y.V."/>
            <person name="Weiner R.M."/>
            <person name="Laub M.T."/>
            <person name="Alexandre G."/>
            <person name="Mrazek J."/>
            <person name="Ren Q."/>
            <person name="Paulsen I.T."/>
            <person name="Nelson K.E."/>
            <person name="Khouri H.M."/>
            <person name="Radune D."/>
            <person name="Sosa J."/>
            <person name="Dodson R.J."/>
            <person name="Sullivan S.A."/>
            <person name="Rosovitz M.J."/>
            <person name="Madupu R."/>
            <person name="Brinkac L.M."/>
            <person name="Durkin A.S."/>
            <person name="Daugherty S.C."/>
            <person name="Kothari S.P."/>
            <person name="Giglio M.G."/>
            <person name="Zhou L."/>
            <person name="Haft D.H."/>
            <person name="Selengut J.D."/>
            <person name="Davidsen T.M."/>
            <person name="Yang Q."/>
            <person name="Zafar N."/>
            <person name="Ward N.L."/>
        </authorList>
    </citation>
    <scope>NUCLEOTIDE SEQUENCE [LARGE SCALE GENOMIC DNA]</scope>
    <source>
        <strain>ATCC 15444</strain>
    </source>
</reference>
<protein>
    <recommendedName>
        <fullName evidence="1">Alanine--tRNA ligase</fullName>
        <ecNumber evidence="1">6.1.1.7</ecNumber>
    </recommendedName>
    <alternativeName>
        <fullName evidence="1">Alanyl-tRNA synthetase</fullName>
        <shortName evidence="1">AlaRS</shortName>
    </alternativeName>
</protein>
<proteinExistence type="inferred from homology"/>
<comment type="function">
    <text evidence="1">Catalyzes the attachment of alanine to tRNA(Ala) in a two-step reaction: alanine is first activated by ATP to form Ala-AMP and then transferred to the acceptor end of tRNA(Ala). Also edits incorrectly charged Ser-tRNA(Ala) and Gly-tRNA(Ala) via its editing domain.</text>
</comment>
<comment type="catalytic activity">
    <reaction evidence="1">
        <text>tRNA(Ala) + L-alanine + ATP = L-alanyl-tRNA(Ala) + AMP + diphosphate</text>
        <dbReference type="Rhea" id="RHEA:12540"/>
        <dbReference type="Rhea" id="RHEA-COMP:9657"/>
        <dbReference type="Rhea" id="RHEA-COMP:9923"/>
        <dbReference type="ChEBI" id="CHEBI:30616"/>
        <dbReference type="ChEBI" id="CHEBI:33019"/>
        <dbReference type="ChEBI" id="CHEBI:57972"/>
        <dbReference type="ChEBI" id="CHEBI:78442"/>
        <dbReference type="ChEBI" id="CHEBI:78497"/>
        <dbReference type="ChEBI" id="CHEBI:456215"/>
        <dbReference type="EC" id="6.1.1.7"/>
    </reaction>
</comment>
<comment type="cofactor">
    <cofactor evidence="1">
        <name>Zn(2+)</name>
        <dbReference type="ChEBI" id="CHEBI:29105"/>
    </cofactor>
    <text evidence="1">Binds 1 zinc ion per subunit.</text>
</comment>
<comment type="subcellular location">
    <subcellularLocation>
        <location evidence="1">Cytoplasm</location>
    </subcellularLocation>
</comment>
<comment type="domain">
    <text evidence="1">Consists of three domains; the N-terminal catalytic domain, the editing domain and the C-terminal C-Ala domain. The editing domain removes incorrectly charged amino acids, while the C-Ala domain, along with tRNA(Ala), serves as a bridge to cooperatively bring together the editing and aminoacylation centers thus stimulating deacylation of misacylated tRNAs.</text>
</comment>
<comment type="similarity">
    <text evidence="1">Belongs to the class-II aminoacyl-tRNA synthetase family.</text>
</comment>
<organism>
    <name type="scientific">Hyphomonas neptunium (strain ATCC 15444)</name>
    <dbReference type="NCBI Taxonomy" id="228405"/>
    <lineage>
        <taxon>Bacteria</taxon>
        <taxon>Pseudomonadati</taxon>
        <taxon>Pseudomonadota</taxon>
        <taxon>Alphaproteobacteria</taxon>
        <taxon>Hyphomonadales</taxon>
        <taxon>Hyphomonadaceae</taxon>
        <taxon>Hyphomonas</taxon>
    </lineage>
</organism>
<feature type="chain" id="PRO_0000347637" description="Alanine--tRNA ligase">
    <location>
        <begin position="1"/>
        <end position="881"/>
    </location>
</feature>
<feature type="region of interest" description="Disordered" evidence="2">
    <location>
        <begin position="848"/>
        <end position="867"/>
    </location>
</feature>
<feature type="binding site" evidence="1">
    <location>
        <position position="564"/>
    </location>
    <ligand>
        <name>Zn(2+)</name>
        <dbReference type="ChEBI" id="CHEBI:29105"/>
    </ligand>
</feature>
<feature type="binding site" evidence="1">
    <location>
        <position position="568"/>
    </location>
    <ligand>
        <name>Zn(2+)</name>
        <dbReference type="ChEBI" id="CHEBI:29105"/>
    </ligand>
</feature>
<feature type="binding site" evidence="1">
    <location>
        <position position="673"/>
    </location>
    <ligand>
        <name>Zn(2+)</name>
        <dbReference type="ChEBI" id="CHEBI:29105"/>
    </ligand>
</feature>
<feature type="binding site" evidence="1">
    <location>
        <position position="677"/>
    </location>
    <ligand>
        <name>Zn(2+)</name>
        <dbReference type="ChEBI" id="CHEBI:29105"/>
    </ligand>
</feature>
<evidence type="ECO:0000255" key="1">
    <source>
        <dbReference type="HAMAP-Rule" id="MF_00036"/>
    </source>
</evidence>
<evidence type="ECO:0000256" key="2">
    <source>
        <dbReference type="SAM" id="MobiDB-lite"/>
    </source>
</evidence>
<keyword id="KW-0030">Aminoacyl-tRNA synthetase</keyword>
<keyword id="KW-0067">ATP-binding</keyword>
<keyword id="KW-0963">Cytoplasm</keyword>
<keyword id="KW-0436">Ligase</keyword>
<keyword id="KW-0479">Metal-binding</keyword>
<keyword id="KW-0547">Nucleotide-binding</keyword>
<keyword id="KW-0648">Protein biosynthesis</keyword>
<keyword id="KW-1185">Reference proteome</keyword>
<keyword id="KW-0694">RNA-binding</keyword>
<keyword id="KW-0820">tRNA-binding</keyword>
<keyword id="KW-0862">Zinc</keyword>
<dbReference type="EC" id="6.1.1.7" evidence="1"/>
<dbReference type="EMBL" id="CP000158">
    <property type="protein sequence ID" value="ABI78398.1"/>
    <property type="molecule type" value="Genomic_DNA"/>
</dbReference>
<dbReference type="RefSeq" id="WP_011647717.1">
    <property type="nucleotide sequence ID" value="NC_008358.1"/>
</dbReference>
<dbReference type="SMR" id="Q0BYM3"/>
<dbReference type="STRING" id="228405.HNE_2741"/>
<dbReference type="KEGG" id="hne:HNE_2741"/>
<dbReference type="eggNOG" id="COG0013">
    <property type="taxonomic scope" value="Bacteria"/>
</dbReference>
<dbReference type="HOGENOM" id="CLU_004485_1_1_5"/>
<dbReference type="Proteomes" id="UP000001959">
    <property type="component" value="Chromosome"/>
</dbReference>
<dbReference type="GO" id="GO:0005829">
    <property type="term" value="C:cytosol"/>
    <property type="evidence" value="ECO:0007669"/>
    <property type="project" value="TreeGrafter"/>
</dbReference>
<dbReference type="GO" id="GO:0004813">
    <property type="term" value="F:alanine-tRNA ligase activity"/>
    <property type="evidence" value="ECO:0007669"/>
    <property type="project" value="UniProtKB-UniRule"/>
</dbReference>
<dbReference type="GO" id="GO:0002161">
    <property type="term" value="F:aminoacyl-tRNA deacylase activity"/>
    <property type="evidence" value="ECO:0007669"/>
    <property type="project" value="TreeGrafter"/>
</dbReference>
<dbReference type="GO" id="GO:0005524">
    <property type="term" value="F:ATP binding"/>
    <property type="evidence" value="ECO:0007669"/>
    <property type="project" value="UniProtKB-UniRule"/>
</dbReference>
<dbReference type="GO" id="GO:0000049">
    <property type="term" value="F:tRNA binding"/>
    <property type="evidence" value="ECO:0007669"/>
    <property type="project" value="UniProtKB-KW"/>
</dbReference>
<dbReference type="GO" id="GO:0008270">
    <property type="term" value="F:zinc ion binding"/>
    <property type="evidence" value="ECO:0007669"/>
    <property type="project" value="UniProtKB-UniRule"/>
</dbReference>
<dbReference type="GO" id="GO:0006419">
    <property type="term" value="P:alanyl-tRNA aminoacylation"/>
    <property type="evidence" value="ECO:0007669"/>
    <property type="project" value="UniProtKB-UniRule"/>
</dbReference>
<dbReference type="GO" id="GO:0045892">
    <property type="term" value="P:negative regulation of DNA-templated transcription"/>
    <property type="evidence" value="ECO:0007669"/>
    <property type="project" value="TreeGrafter"/>
</dbReference>
<dbReference type="CDD" id="cd00673">
    <property type="entry name" value="AlaRS_core"/>
    <property type="match status" value="1"/>
</dbReference>
<dbReference type="FunFam" id="3.10.310.40:FF:000001">
    <property type="entry name" value="Alanine--tRNA ligase"/>
    <property type="match status" value="1"/>
</dbReference>
<dbReference type="FunFam" id="3.30.930.10:FF:000004">
    <property type="entry name" value="Alanine--tRNA ligase"/>
    <property type="match status" value="1"/>
</dbReference>
<dbReference type="FunFam" id="3.30.980.10:FF:000004">
    <property type="entry name" value="Alanine--tRNA ligase, cytoplasmic"/>
    <property type="match status" value="1"/>
</dbReference>
<dbReference type="Gene3D" id="2.40.30.130">
    <property type="match status" value="1"/>
</dbReference>
<dbReference type="Gene3D" id="3.10.310.40">
    <property type="match status" value="1"/>
</dbReference>
<dbReference type="Gene3D" id="3.30.54.20">
    <property type="match status" value="1"/>
</dbReference>
<dbReference type="Gene3D" id="6.10.250.550">
    <property type="match status" value="1"/>
</dbReference>
<dbReference type="Gene3D" id="3.30.930.10">
    <property type="entry name" value="Bira Bifunctional Protein, Domain 2"/>
    <property type="match status" value="1"/>
</dbReference>
<dbReference type="Gene3D" id="3.30.980.10">
    <property type="entry name" value="Threonyl-trna Synthetase, Chain A, domain 2"/>
    <property type="match status" value="1"/>
</dbReference>
<dbReference type="HAMAP" id="MF_00036_B">
    <property type="entry name" value="Ala_tRNA_synth_B"/>
    <property type="match status" value="1"/>
</dbReference>
<dbReference type="InterPro" id="IPR045864">
    <property type="entry name" value="aa-tRNA-synth_II/BPL/LPL"/>
</dbReference>
<dbReference type="InterPro" id="IPR002318">
    <property type="entry name" value="Ala-tRNA-lgiase_IIc"/>
</dbReference>
<dbReference type="InterPro" id="IPR018162">
    <property type="entry name" value="Ala-tRNA-ligase_IIc_anticod-bd"/>
</dbReference>
<dbReference type="InterPro" id="IPR018165">
    <property type="entry name" value="Ala-tRNA-synth_IIc_core"/>
</dbReference>
<dbReference type="InterPro" id="IPR018164">
    <property type="entry name" value="Ala-tRNA-synth_IIc_N"/>
</dbReference>
<dbReference type="InterPro" id="IPR050058">
    <property type="entry name" value="Ala-tRNA_ligase"/>
</dbReference>
<dbReference type="InterPro" id="IPR023033">
    <property type="entry name" value="Ala_tRNA_ligase_euk/bac"/>
</dbReference>
<dbReference type="InterPro" id="IPR003156">
    <property type="entry name" value="DHHA1_dom"/>
</dbReference>
<dbReference type="InterPro" id="IPR018163">
    <property type="entry name" value="Thr/Ala-tRNA-synth_IIc_edit"/>
</dbReference>
<dbReference type="InterPro" id="IPR009000">
    <property type="entry name" value="Transl_B-barrel_sf"/>
</dbReference>
<dbReference type="InterPro" id="IPR012947">
    <property type="entry name" value="tRNA_SAD"/>
</dbReference>
<dbReference type="NCBIfam" id="TIGR00344">
    <property type="entry name" value="alaS"/>
    <property type="match status" value="1"/>
</dbReference>
<dbReference type="PANTHER" id="PTHR11777:SF9">
    <property type="entry name" value="ALANINE--TRNA LIGASE, CYTOPLASMIC"/>
    <property type="match status" value="1"/>
</dbReference>
<dbReference type="PANTHER" id="PTHR11777">
    <property type="entry name" value="ALANYL-TRNA SYNTHETASE"/>
    <property type="match status" value="1"/>
</dbReference>
<dbReference type="Pfam" id="PF02272">
    <property type="entry name" value="DHHA1"/>
    <property type="match status" value="1"/>
</dbReference>
<dbReference type="Pfam" id="PF01411">
    <property type="entry name" value="tRNA-synt_2c"/>
    <property type="match status" value="1"/>
</dbReference>
<dbReference type="Pfam" id="PF07973">
    <property type="entry name" value="tRNA_SAD"/>
    <property type="match status" value="1"/>
</dbReference>
<dbReference type="PRINTS" id="PR00980">
    <property type="entry name" value="TRNASYNTHALA"/>
</dbReference>
<dbReference type="SMART" id="SM00863">
    <property type="entry name" value="tRNA_SAD"/>
    <property type="match status" value="1"/>
</dbReference>
<dbReference type="SUPFAM" id="SSF55681">
    <property type="entry name" value="Class II aaRS and biotin synthetases"/>
    <property type="match status" value="1"/>
</dbReference>
<dbReference type="SUPFAM" id="SSF101353">
    <property type="entry name" value="Putative anticodon-binding domain of alanyl-tRNA synthetase (AlaRS)"/>
    <property type="match status" value="1"/>
</dbReference>
<dbReference type="SUPFAM" id="SSF55186">
    <property type="entry name" value="ThrRS/AlaRS common domain"/>
    <property type="match status" value="1"/>
</dbReference>
<dbReference type="SUPFAM" id="SSF50447">
    <property type="entry name" value="Translation proteins"/>
    <property type="match status" value="1"/>
</dbReference>
<dbReference type="PROSITE" id="PS50860">
    <property type="entry name" value="AA_TRNA_LIGASE_II_ALA"/>
    <property type="match status" value="1"/>
</dbReference>
<accession>Q0BYM3</accession>